<protein>
    <recommendedName>
        <fullName>Uncharacterized protein YibT</fullName>
    </recommendedName>
</protein>
<feature type="chain" id="PRO_0000263020" description="Uncharacterized protein YibT">
    <location>
        <begin position="1"/>
        <end position="69"/>
    </location>
</feature>
<sequence>MAKIGENVPLLIDKAVDFMASSQAFREYLNKTPPRDYVPSEVPSESAPIYLQRLEYYRRLYRPKEEERG</sequence>
<proteinExistence type="predicted"/>
<dbReference type="EMBL" id="AE006468">
    <property type="protein sequence ID" value="AAL22547.1"/>
    <property type="molecule type" value="Genomic_DNA"/>
</dbReference>
<dbReference type="RefSeq" id="NP_462588.1">
    <property type="nucleotide sequence ID" value="NC_003197.2"/>
</dbReference>
<dbReference type="RefSeq" id="WP_001062558.1">
    <property type="nucleotide sequence ID" value="NC_003197.2"/>
</dbReference>
<dbReference type="SMR" id="Q8ZL66"/>
<dbReference type="STRING" id="99287.STM3688"/>
<dbReference type="PaxDb" id="99287-STM3688"/>
<dbReference type="GeneID" id="1255212"/>
<dbReference type="KEGG" id="stm:STM3688"/>
<dbReference type="PATRIC" id="fig|99287.12.peg.3901"/>
<dbReference type="HOGENOM" id="CLU_185147_0_0_6"/>
<dbReference type="OMA" id="PTCDQQE"/>
<dbReference type="PhylomeDB" id="Q8ZL66"/>
<dbReference type="BioCyc" id="SENT99287:STM3688-MONOMER"/>
<dbReference type="Proteomes" id="UP000001014">
    <property type="component" value="Chromosome"/>
</dbReference>
<dbReference type="GO" id="GO:0003677">
    <property type="term" value="F:DNA binding"/>
    <property type="evidence" value="ECO:0007669"/>
    <property type="project" value="InterPro"/>
</dbReference>
<dbReference type="GO" id="GO:0003887">
    <property type="term" value="F:DNA-directed DNA polymerase activity"/>
    <property type="evidence" value="ECO:0007669"/>
    <property type="project" value="InterPro"/>
</dbReference>
<dbReference type="GO" id="GO:0006260">
    <property type="term" value="P:DNA replication"/>
    <property type="evidence" value="ECO:0007669"/>
    <property type="project" value="InterPro"/>
</dbReference>
<dbReference type="Gene3D" id="1.20.58.250">
    <property type="entry name" value="DNA polymerase III-theta"/>
    <property type="match status" value="1"/>
</dbReference>
<dbReference type="InterPro" id="IPR036745">
    <property type="entry name" value="PolIII_theta_sf"/>
</dbReference>
<dbReference type="SUPFAM" id="SSF46575">
    <property type="entry name" value="DNA polymerase III theta subunit-like"/>
    <property type="match status" value="1"/>
</dbReference>
<name>YIBT_SALTY</name>
<reference key="1">
    <citation type="journal article" date="2001" name="Nature">
        <title>Complete genome sequence of Salmonella enterica serovar Typhimurium LT2.</title>
        <authorList>
            <person name="McClelland M."/>
            <person name="Sanderson K.E."/>
            <person name="Spieth J."/>
            <person name="Clifton S.W."/>
            <person name="Latreille P."/>
            <person name="Courtney L."/>
            <person name="Porwollik S."/>
            <person name="Ali J."/>
            <person name="Dante M."/>
            <person name="Du F."/>
            <person name="Hou S."/>
            <person name="Layman D."/>
            <person name="Leonard S."/>
            <person name="Nguyen C."/>
            <person name="Scott K."/>
            <person name="Holmes A."/>
            <person name="Grewal N."/>
            <person name="Mulvaney E."/>
            <person name="Ryan E."/>
            <person name="Sun H."/>
            <person name="Florea L."/>
            <person name="Miller W."/>
            <person name="Stoneking T."/>
            <person name="Nhan M."/>
            <person name="Waterston R."/>
            <person name="Wilson R.K."/>
        </authorList>
    </citation>
    <scope>NUCLEOTIDE SEQUENCE [LARGE SCALE GENOMIC DNA]</scope>
    <source>
        <strain>LT2 / SGSC1412 / ATCC 700720</strain>
    </source>
</reference>
<organism>
    <name type="scientific">Salmonella typhimurium (strain LT2 / SGSC1412 / ATCC 700720)</name>
    <dbReference type="NCBI Taxonomy" id="99287"/>
    <lineage>
        <taxon>Bacteria</taxon>
        <taxon>Pseudomonadati</taxon>
        <taxon>Pseudomonadota</taxon>
        <taxon>Gammaproteobacteria</taxon>
        <taxon>Enterobacterales</taxon>
        <taxon>Enterobacteriaceae</taxon>
        <taxon>Salmonella</taxon>
    </lineage>
</organism>
<gene>
    <name type="primary">yibT</name>
    <name type="ordered locus">STM3688</name>
</gene>
<keyword id="KW-1185">Reference proteome</keyword>
<accession>Q8ZL66</accession>